<comment type="function">
    <text evidence="1">Single strand-specific metallo-endoribonuclease involved in late-stage 70S ribosome quality control and in maturation of the 3' terminus of the 16S rRNA.</text>
</comment>
<comment type="cofactor">
    <cofactor evidence="1">
        <name>Zn(2+)</name>
        <dbReference type="ChEBI" id="CHEBI:29105"/>
    </cofactor>
    <text evidence="1">Binds 1 zinc ion.</text>
</comment>
<comment type="subcellular location">
    <subcellularLocation>
        <location evidence="1">Cytoplasm</location>
    </subcellularLocation>
</comment>
<comment type="similarity">
    <text evidence="1">Belongs to the endoribonuclease YbeY family.</text>
</comment>
<keyword id="KW-0963">Cytoplasm</keyword>
<keyword id="KW-0255">Endonuclease</keyword>
<keyword id="KW-0378">Hydrolase</keyword>
<keyword id="KW-0479">Metal-binding</keyword>
<keyword id="KW-0540">Nuclease</keyword>
<keyword id="KW-0690">Ribosome biogenesis</keyword>
<keyword id="KW-0698">rRNA processing</keyword>
<keyword id="KW-0862">Zinc</keyword>
<name>YBEY_CAMJR</name>
<gene>
    <name evidence="1" type="primary">ybeY</name>
    <name type="ordered locus">CJE0116</name>
</gene>
<dbReference type="EC" id="3.1.-.-" evidence="1"/>
<dbReference type="EMBL" id="CP000025">
    <property type="protein sequence ID" value="AAW34711.1"/>
    <property type="molecule type" value="Genomic_DNA"/>
</dbReference>
<dbReference type="RefSeq" id="WP_002851664.1">
    <property type="nucleotide sequence ID" value="NC_003912.7"/>
</dbReference>
<dbReference type="SMR" id="Q5HX45"/>
<dbReference type="KEGG" id="cjr:CJE0116"/>
<dbReference type="HOGENOM" id="CLU_106710_3_0_7"/>
<dbReference type="GO" id="GO:0005737">
    <property type="term" value="C:cytoplasm"/>
    <property type="evidence" value="ECO:0007669"/>
    <property type="project" value="UniProtKB-SubCell"/>
</dbReference>
<dbReference type="GO" id="GO:0004222">
    <property type="term" value="F:metalloendopeptidase activity"/>
    <property type="evidence" value="ECO:0007669"/>
    <property type="project" value="InterPro"/>
</dbReference>
<dbReference type="GO" id="GO:0004521">
    <property type="term" value="F:RNA endonuclease activity"/>
    <property type="evidence" value="ECO:0007669"/>
    <property type="project" value="UniProtKB-UniRule"/>
</dbReference>
<dbReference type="GO" id="GO:0008270">
    <property type="term" value="F:zinc ion binding"/>
    <property type="evidence" value="ECO:0007669"/>
    <property type="project" value="UniProtKB-UniRule"/>
</dbReference>
<dbReference type="GO" id="GO:0006364">
    <property type="term" value="P:rRNA processing"/>
    <property type="evidence" value="ECO:0007669"/>
    <property type="project" value="UniProtKB-UniRule"/>
</dbReference>
<dbReference type="Gene3D" id="3.40.390.30">
    <property type="entry name" value="Metalloproteases ('zincins'), catalytic domain"/>
    <property type="match status" value="1"/>
</dbReference>
<dbReference type="HAMAP" id="MF_00009">
    <property type="entry name" value="Endoribonucl_YbeY"/>
    <property type="match status" value="1"/>
</dbReference>
<dbReference type="InterPro" id="IPR023091">
    <property type="entry name" value="MetalPrtase_cat_dom_sf_prd"/>
</dbReference>
<dbReference type="InterPro" id="IPR002036">
    <property type="entry name" value="YbeY"/>
</dbReference>
<dbReference type="InterPro" id="IPR020549">
    <property type="entry name" value="YbeY_CS"/>
</dbReference>
<dbReference type="NCBIfam" id="TIGR00043">
    <property type="entry name" value="rRNA maturation RNase YbeY"/>
    <property type="match status" value="1"/>
</dbReference>
<dbReference type="PANTHER" id="PTHR46986">
    <property type="entry name" value="ENDORIBONUCLEASE YBEY, CHLOROPLASTIC"/>
    <property type="match status" value="1"/>
</dbReference>
<dbReference type="PANTHER" id="PTHR46986:SF1">
    <property type="entry name" value="ENDORIBONUCLEASE YBEY, CHLOROPLASTIC"/>
    <property type="match status" value="1"/>
</dbReference>
<dbReference type="Pfam" id="PF02130">
    <property type="entry name" value="YbeY"/>
    <property type="match status" value="1"/>
</dbReference>
<dbReference type="SUPFAM" id="SSF55486">
    <property type="entry name" value="Metalloproteases ('zincins'), catalytic domain"/>
    <property type="match status" value="1"/>
</dbReference>
<dbReference type="PROSITE" id="PS01306">
    <property type="entry name" value="UPF0054"/>
    <property type="match status" value="1"/>
</dbReference>
<feature type="chain" id="PRO_0000102431" description="Endoribonuclease YbeY">
    <location>
        <begin position="1"/>
        <end position="135"/>
    </location>
</feature>
<feature type="binding site" evidence="1">
    <location>
        <position position="94"/>
    </location>
    <ligand>
        <name>Zn(2+)</name>
        <dbReference type="ChEBI" id="CHEBI:29105"/>
        <note>catalytic</note>
    </ligand>
</feature>
<feature type="binding site" evidence="1">
    <location>
        <position position="98"/>
    </location>
    <ligand>
        <name>Zn(2+)</name>
        <dbReference type="ChEBI" id="CHEBI:29105"/>
        <note>catalytic</note>
    </ligand>
</feature>
<feature type="binding site" evidence="1">
    <location>
        <position position="104"/>
    </location>
    <ligand>
        <name>Zn(2+)</name>
        <dbReference type="ChEBI" id="CHEBI:29105"/>
        <note>catalytic</note>
    </ligand>
</feature>
<organism>
    <name type="scientific">Campylobacter jejuni (strain RM1221)</name>
    <dbReference type="NCBI Taxonomy" id="195099"/>
    <lineage>
        <taxon>Bacteria</taxon>
        <taxon>Pseudomonadati</taxon>
        <taxon>Campylobacterota</taxon>
        <taxon>Epsilonproteobacteria</taxon>
        <taxon>Campylobacterales</taxon>
        <taxon>Campylobacteraceae</taxon>
        <taxon>Campylobacter</taxon>
    </lineage>
</organism>
<accession>Q5HX45</accession>
<evidence type="ECO:0000255" key="1">
    <source>
        <dbReference type="HAMAP-Rule" id="MF_00009"/>
    </source>
</evidence>
<sequence>MILSDEKCDFLESIASFLSPKDVELVFVDSKEMQEINLEQRKQDKTTDVLSFPLENIDESLPLGSVVINVDLAKEKAKELGHSYEEEISLLFIHAMLHLLGFDHENDNGEMREKEKELIEHFNLPKSLIVRTLED</sequence>
<reference key="1">
    <citation type="journal article" date="2005" name="PLoS Biol.">
        <title>Major structural differences and novel potential virulence mechanisms from the genomes of multiple Campylobacter species.</title>
        <authorList>
            <person name="Fouts D.E."/>
            <person name="Mongodin E.F."/>
            <person name="Mandrell R.E."/>
            <person name="Miller W.G."/>
            <person name="Rasko D.A."/>
            <person name="Ravel J."/>
            <person name="Brinkac L.M."/>
            <person name="DeBoy R.T."/>
            <person name="Parker C.T."/>
            <person name="Daugherty S.C."/>
            <person name="Dodson R.J."/>
            <person name="Durkin A.S."/>
            <person name="Madupu R."/>
            <person name="Sullivan S.A."/>
            <person name="Shetty J.U."/>
            <person name="Ayodeji M.A."/>
            <person name="Shvartsbeyn A."/>
            <person name="Schatz M.C."/>
            <person name="Badger J.H."/>
            <person name="Fraser C.M."/>
            <person name="Nelson K.E."/>
        </authorList>
    </citation>
    <scope>NUCLEOTIDE SEQUENCE [LARGE SCALE GENOMIC DNA]</scope>
    <source>
        <strain>RM1221</strain>
    </source>
</reference>
<protein>
    <recommendedName>
        <fullName evidence="1">Endoribonuclease YbeY</fullName>
        <ecNumber evidence="1">3.1.-.-</ecNumber>
    </recommendedName>
</protein>
<proteinExistence type="inferred from homology"/>